<reference key="1">
    <citation type="journal article" date="2001" name="J. Bacteriol.">
        <title>Genome sequence and comparative analysis of the solvent-producing bacterium Clostridium acetobutylicum.</title>
        <authorList>
            <person name="Noelling J."/>
            <person name="Breton G."/>
            <person name="Omelchenko M.V."/>
            <person name="Makarova K.S."/>
            <person name="Zeng Q."/>
            <person name="Gibson R."/>
            <person name="Lee H.M."/>
            <person name="Dubois J."/>
            <person name="Qiu D."/>
            <person name="Hitti J."/>
            <person name="Wolf Y.I."/>
            <person name="Tatusov R.L."/>
            <person name="Sabathe F."/>
            <person name="Doucette-Stamm L.A."/>
            <person name="Soucaille P."/>
            <person name="Daly M.J."/>
            <person name="Bennett G.N."/>
            <person name="Koonin E.V."/>
            <person name="Smith D.R."/>
        </authorList>
    </citation>
    <scope>NUCLEOTIDE SEQUENCE [LARGE SCALE GENOMIC DNA]</scope>
    <source>
        <strain>ATCC 824 / DSM 792 / JCM 1419 / IAM 19013 / LMG 5710 / NBRC 13948 / NRRL B-527 / VKM B-1787 / 2291 / W</strain>
    </source>
</reference>
<sequence length="249" mass="28086">MGIIQTKDLNLYYGNVQALKKINLDFSANTVTALIGPSGCGKSTFLRTINRMNDLISTVKIDGEVMFEGKDVYKDYDEIELRKRVGMVFQKPNPFPMSIYDNVAYGPRIHGIKNKGKLDEIVERSLKGSALWEEVKDRLKKSALGLSGGQQQRLCIARTLAVEPEVLLMDEPTSALDPISTLKIEELMDELKHKYTVIIVTHNMQQAGRISDNTAFFLNGEVVENGKTEDIFYKPKDKRTEDYITGRFG</sequence>
<dbReference type="EC" id="7.3.2.1" evidence="1"/>
<dbReference type="EMBL" id="AE001437">
    <property type="protein sequence ID" value="AAK79674.1"/>
    <property type="molecule type" value="Genomic_DNA"/>
</dbReference>
<dbReference type="PIR" id="G97110">
    <property type="entry name" value="G97110"/>
</dbReference>
<dbReference type="RefSeq" id="NP_348334.1">
    <property type="nucleotide sequence ID" value="NC_003030.1"/>
</dbReference>
<dbReference type="RefSeq" id="WP_010965015.1">
    <property type="nucleotide sequence ID" value="NC_003030.1"/>
</dbReference>
<dbReference type="SMR" id="Q97IE0"/>
<dbReference type="STRING" id="272562.CA_C1708"/>
<dbReference type="GeneID" id="44998203"/>
<dbReference type="KEGG" id="cac:CA_C1708"/>
<dbReference type="PATRIC" id="fig|272562.8.peg.1910"/>
<dbReference type="eggNOG" id="COG1117">
    <property type="taxonomic scope" value="Bacteria"/>
</dbReference>
<dbReference type="HOGENOM" id="CLU_000604_1_22_9"/>
<dbReference type="OrthoDB" id="9804199at2"/>
<dbReference type="Proteomes" id="UP000000814">
    <property type="component" value="Chromosome"/>
</dbReference>
<dbReference type="GO" id="GO:0005886">
    <property type="term" value="C:plasma membrane"/>
    <property type="evidence" value="ECO:0007669"/>
    <property type="project" value="UniProtKB-SubCell"/>
</dbReference>
<dbReference type="GO" id="GO:0005524">
    <property type="term" value="F:ATP binding"/>
    <property type="evidence" value="ECO:0007669"/>
    <property type="project" value="UniProtKB-KW"/>
</dbReference>
<dbReference type="GO" id="GO:0016887">
    <property type="term" value="F:ATP hydrolysis activity"/>
    <property type="evidence" value="ECO:0007669"/>
    <property type="project" value="InterPro"/>
</dbReference>
<dbReference type="GO" id="GO:0015415">
    <property type="term" value="F:ATPase-coupled phosphate ion transmembrane transporter activity"/>
    <property type="evidence" value="ECO:0007669"/>
    <property type="project" value="UniProtKB-EC"/>
</dbReference>
<dbReference type="GO" id="GO:0035435">
    <property type="term" value="P:phosphate ion transmembrane transport"/>
    <property type="evidence" value="ECO:0007669"/>
    <property type="project" value="InterPro"/>
</dbReference>
<dbReference type="CDD" id="cd03260">
    <property type="entry name" value="ABC_PstB_phosphate_transporter"/>
    <property type="match status" value="1"/>
</dbReference>
<dbReference type="FunFam" id="3.40.50.300:FF:000132">
    <property type="entry name" value="Phosphate import ATP-binding protein PstB"/>
    <property type="match status" value="1"/>
</dbReference>
<dbReference type="Gene3D" id="3.40.50.300">
    <property type="entry name" value="P-loop containing nucleotide triphosphate hydrolases"/>
    <property type="match status" value="1"/>
</dbReference>
<dbReference type="InterPro" id="IPR003593">
    <property type="entry name" value="AAA+_ATPase"/>
</dbReference>
<dbReference type="InterPro" id="IPR003439">
    <property type="entry name" value="ABC_transporter-like_ATP-bd"/>
</dbReference>
<dbReference type="InterPro" id="IPR017871">
    <property type="entry name" value="ABC_transporter-like_CS"/>
</dbReference>
<dbReference type="InterPro" id="IPR027417">
    <property type="entry name" value="P-loop_NTPase"/>
</dbReference>
<dbReference type="InterPro" id="IPR005670">
    <property type="entry name" value="PstB-like"/>
</dbReference>
<dbReference type="NCBIfam" id="TIGR00972">
    <property type="entry name" value="3a0107s01c2"/>
    <property type="match status" value="1"/>
</dbReference>
<dbReference type="PANTHER" id="PTHR43423">
    <property type="entry name" value="ABC TRANSPORTER I FAMILY MEMBER 17"/>
    <property type="match status" value="1"/>
</dbReference>
<dbReference type="PANTHER" id="PTHR43423:SF1">
    <property type="entry name" value="ABC TRANSPORTER I FAMILY MEMBER 17"/>
    <property type="match status" value="1"/>
</dbReference>
<dbReference type="Pfam" id="PF00005">
    <property type="entry name" value="ABC_tran"/>
    <property type="match status" value="1"/>
</dbReference>
<dbReference type="SMART" id="SM00382">
    <property type="entry name" value="AAA"/>
    <property type="match status" value="1"/>
</dbReference>
<dbReference type="SUPFAM" id="SSF52540">
    <property type="entry name" value="P-loop containing nucleoside triphosphate hydrolases"/>
    <property type="match status" value="1"/>
</dbReference>
<dbReference type="PROSITE" id="PS00211">
    <property type="entry name" value="ABC_TRANSPORTER_1"/>
    <property type="match status" value="1"/>
</dbReference>
<dbReference type="PROSITE" id="PS50893">
    <property type="entry name" value="ABC_TRANSPORTER_2"/>
    <property type="match status" value="1"/>
</dbReference>
<dbReference type="PROSITE" id="PS51238">
    <property type="entry name" value="PSTB"/>
    <property type="match status" value="1"/>
</dbReference>
<protein>
    <recommendedName>
        <fullName evidence="1">Phosphate import ATP-binding protein PstB</fullName>
        <ecNumber evidence="1">7.3.2.1</ecNumber>
    </recommendedName>
    <alternativeName>
        <fullName evidence="1">ABC phosphate transporter</fullName>
    </alternativeName>
    <alternativeName>
        <fullName evidence="1">Phosphate-transporting ATPase</fullName>
    </alternativeName>
</protein>
<evidence type="ECO:0000255" key="1">
    <source>
        <dbReference type="HAMAP-Rule" id="MF_01702"/>
    </source>
</evidence>
<proteinExistence type="inferred from homology"/>
<keyword id="KW-0067">ATP-binding</keyword>
<keyword id="KW-1003">Cell membrane</keyword>
<keyword id="KW-0472">Membrane</keyword>
<keyword id="KW-0547">Nucleotide-binding</keyword>
<keyword id="KW-0592">Phosphate transport</keyword>
<keyword id="KW-1185">Reference proteome</keyword>
<keyword id="KW-1278">Translocase</keyword>
<keyword id="KW-0813">Transport</keyword>
<feature type="chain" id="PRO_0000092802" description="Phosphate import ATP-binding protein PstB">
    <location>
        <begin position="1"/>
        <end position="249"/>
    </location>
</feature>
<feature type="domain" description="ABC transporter" evidence="1">
    <location>
        <begin position="4"/>
        <end position="244"/>
    </location>
</feature>
<feature type="binding site" evidence="1">
    <location>
        <begin position="36"/>
        <end position="43"/>
    </location>
    <ligand>
        <name>ATP</name>
        <dbReference type="ChEBI" id="CHEBI:30616"/>
    </ligand>
</feature>
<name>PSTB_CLOAB</name>
<gene>
    <name evidence="1" type="primary">pstB</name>
    <name type="ordered locus">CA_C1708</name>
</gene>
<accession>Q97IE0</accession>
<organism>
    <name type="scientific">Clostridium acetobutylicum (strain ATCC 824 / DSM 792 / JCM 1419 / IAM 19013 / LMG 5710 / NBRC 13948 / NRRL B-527 / VKM B-1787 / 2291 / W)</name>
    <dbReference type="NCBI Taxonomy" id="272562"/>
    <lineage>
        <taxon>Bacteria</taxon>
        <taxon>Bacillati</taxon>
        <taxon>Bacillota</taxon>
        <taxon>Clostridia</taxon>
        <taxon>Eubacteriales</taxon>
        <taxon>Clostridiaceae</taxon>
        <taxon>Clostridium</taxon>
    </lineage>
</organism>
<comment type="function">
    <text evidence="1">Part of the ABC transporter complex PstSACB involved in phosphate import. Responsible for energy coupling to the transport system.</text>
</comment>
<comment type="catalytic activity">
    <reaction evidence="1">
        <text>phosphate(out) + ATP + H2O = ADP + 2 phosphate(in) + H(+)</text>
        <dbReference type="Rhea" id="RHEA:24440"/>
        <dbReference type="ChEBI" id="CHEBI:15377"/>
        <dbReference type="ChEBI" id="CHEBI:15378"/>
        <dbReference type="ChEBI" id="CHEBI:30616"/>
        <dbReference type="ChEBI" id="CHEBI:43474"/>
        <dbReference type="ChEBI" id="CHEBI:456216"/>
        <dbReference type="EC" id="7.3.2.1"/>
    </reaction>
</comment>
<comment type="subunit">
    <text evidence="1">The complex is composed of two ATP-binding proteins (PstB), two transmembrane proteins (PstC and PstA) and a solute-binding protein (PstS).</text>
</comment>
<comment type="subcellular location">
    <subcellularLocation>
        <location evidence="1">Cell membrane</location>
        <topology evidence="1">Peripheral membrane protein</topology>
    </subcellularLocation>
</comment>
<comment type="similarity">
    <text evidence="1">Belongs to the ABC transporter superfamily. Phosphate importer (TC 3.A.1.7) family.</text>
</comment>